<reference key="1">
    <citation type="journal article" date="1996" name="DNA Res.">
        <title>A 718-kb DNA sequence of the Escherichia coli K-12 genome corresponding to the 12.7-28.0 min region on the linkage map.</title>
        <authorList>
            <person name="Oshima T."/>
            <person name="Aiba H."/>
            <person name="Baba T."/>
            <person name="Fujita K."/>
            <person name="Hayashi K."/>
            <person name="Honjo A."/>
            <person name="Ikemoto K."/>
            <person name="Inada T."/>
            <person name="Itoh T."/>
            <person name="Kajihara M."/>
            <person name="Kanai K."/>
            <person name="Kashimoto K."/>
            <person name="Kimura S."/>
            <person name="Kitagawa M."/>
            <person name="Makino K."/>
            <person name="Masuda S."/>
            <person name="Miki T."/>
            <person name="Mizobuchi K."/>
            <person name="Mori H."/>
            <person name="Motomura K."/>
            <person name="Nakamura Y."/>
            <person name="Nashimoto H."/>
            <person name="Nishio Y."/>
            <person name="Saito N."/>
            <person name="Sampei G."/>
            <person name="Seki Y."/>
            <person name="Tagami H."/>
            <person name="Takemoto K."/>
            <person name="Wada C."/>
            <person name="Yamamoto Y."/>
            <person name="Yano M."/>
            <person name="Horiuchi T."/>
        </authorList>
    </citation>
    <scope>NUCLEOTIDE SEQUENCE [LARGE SCALE GENOMIC DNA]</scope>
    <source>
        <strain>K12 / W3110 / ATCC 27325 / DSM 5911</strain>
    </source>
</reference>
<reference key="2">
    <citation type="journal article" date="1997" name="Science">
        <title>The complete genome sequence of Escherichia coli K-12.</title>
        <authorList>
            <person name="Blattner F.R."/>
            <person name="Plunkett G. III"/>
            <person name="Bloch C.A."/>
            <person name="Perna N.T."/>
            <person name="Burland V."/>
            <person name="Riley M."/>
            <person name="Collado-Vides J."/>
            <person name="Glasner J.D."/>
            <person name="Rode C.K."/>
            <person name="Mayhew G.F."/>
            <person name="Gregor J."/>
            <person name="Davis N.W."/>
            <person name="Kirkpatrick H.A."/>
            <person name="Goeden M.A."/>
            <person name="Rose D.J."/>
            <person name="Mau B."/>
            <person name="Shao Y."/>
        </authorList>
    </citation>
    <scope>NUCLEOTIDE SEQUENCE [LARGE SCALE GENOMIC DNA]</scope>
    <source>
        <strain>K12 / MG1655 / ATCC 47076</strain>
    </source>
</reference>
<reference key="3">
    <citation type="journal article" date="2006" name="Mol. Syst. Biol.">
        <title>Highly accurate genome sequences of Escherichia coli K-12 strains MG1655 and W3110.</title>
        <authorList>
            <person name="Hayashi K."/>
            <person name="Morooka N."/>
            <person name="Yamamoto Y."/>
            <person name="Fujita K."/>
            <person name="Isono K."/>
            <person name="Choi S."/>
            <person name="Ohtsubo E."/>
            <person name="Baba T."/>
            <person name="Wanner B.L."/>
            <person name="Mori H."/>
            <person name="Horiuchi T."/>
        </authorList>
    </citation>
    <scope>NUCLEOTIDE SEQUENCE [LARGE SCALE GENOMIC DNA]</scope>
    <source>
        <strain>K12 / W3110 / ATCC 27325 / DSM 5911</strain>
    </source>
</reference>
<reference key="4">
    <citation type="journal article" date="2004" name="J. Bacteriol.">
        <title>The pgaABCD locus of Escherichia coli promotes the synthesis of a polysaccharide adhesin required for biofilm formation.</title>
        <authorList>
            <person name="Wang X."/>
            <person name="Preston J.F. III"/>
            <person name="Romeo T."/>
        </authorList>
    </citation>
    <scope>ROLE IN THE SYNTHESIS OF A BIOFILM POLYSACCHARIDE</scope>
    <scope>OPERON STRUCTURE</scope>
    <scope>DISRUPTION PHENOTYPE</scope>
    <source>
        <strain>K12 / MG1655 / ATCC 47076</strain>
    </source>
</reference>
<reference key="5">
    <citation type="journal article" date="2005" name="Science">
        <title>Global topology analysis of the Escherichia coli inner membrane proteome.</title>
        <authorList>
            <person name="Daley D.O."/>
            <person name="Rapp M."/>
            <person name="Granseth E."/>
            <person name="Melen K."/>
            <person name="Drew D."/>
            <person name="von Heijne G."/>
        </authorList>
    </citation>
    <scope>TOPOLOGY [LARGE SCALE ANALYSIS]</scope>
    <scope>SUBCELLULAR LOCATION</scope>
    <source>
        <strain>K12 / MG1655 / ATCC 47076</strain>
    </source>
</reference>
<reference key="6">
    <citation type="journal article" date="2008" name="J. Bacteriol.">
        <title>Roles of pgaABCD genes in synthesis, modification, and export of the Escherichia coli biofilm adhesin poly-beta-1,6-N-acetyl-D-glucosamine.</title>
        <authorList>
            <person name="Itoh Y."/>
            <person name="Rice J.D."/>
            <person name="Goller C."/>
            <person name="Pannuri A."/>
            <person name="Taylor J."/>
            <person name="Meisner J."/>
            <person name="Beveridge T.J."/>
            <person name="Preston J.F. III"/>
            <person name="Romeo T."/>
        </authorList>
    </citation>
    <scope>FUNCTION IN PGA SYNTHESIS</scope>
    <scope>DISRUPTION PHENOTYPE</scope>
    <source>
        <strain>K12 / MG1655 / ATCC 47076</strain>
    </source>
</reference>
<reference key="7">
    <citation type="journal article" date="2009" name="Mol. Microbiol.">
        <title>Second messenger signalling governs Escherichia coli biofilm induction upon ribosomal stress.</title>
        <authorList>
            <person name="Boehm A."/>
            <person name="Steiner S."/>
            <person name="Zaehringer F."/>
            <person name="Casanova A."/>
            <person name="Hamburger F."/>
            <person name="Ritz D."/>
            <person name="Keck W."/>
            <person name="Ackermann M."/>
            <person name="Schirmer T."/>
            <person name="Jenal U."/>
        </authorList>
    </citation>
    <scope>ROLE IN BIOFILM FORMATION</scope>
    <scope>INDUCTION</scope>
    <source>
        <strain>K12 / MG1655 / AB400</strain>
    </source>
</reference>
<name>PGAD_ECOLI</name>
<proteinExistence type="evidence at protein level"/>
<dbReference type="EMBL" id="U00096">
    <property type="protein sequence ID" value="AAC74106.1"/>
    <property type="molecule type" value="Genomic_DNA"/>
</dbReference>
<dbReference type="EMBL" id="AP009048">
    <property type="protein sequence ID" value="BAA35802.1"/>
    <property type="molecule type" value="Genomic_DNA"/>
</dbReference>
<dbReference type="PIR" id="C64844">
    <property type="entry name" value="C64844"/>
</dbReference>
<dbReference type="RefSeq" id="NP_415540.1">
    <property type="nucleotide sequence ID" value="NC_000913.3"/>
</dbReference>
<dbReference type="RefSeq" id="WP_001061095.1">
    <property type="nucleotide sequence ID" value="NZ_STEB01000006.1"/>
</dbReference>
<dbReference type="SMR" id="P69432"/>
<dbReference type="BioGRID" id="4260055">
    <property type="interactions" value="21"/>
</dbReference>
<dbReference type="BioGRID" id="851820">
    <property type="interactions" value="7"/>
</dbReference>
<dbReference type="ComplexPortal" id="CPX-3743">
    <property type="entry name" value="pgaCD beta-glycosyltransferase complex"/>
</dbReference>
<dbReference type="DIP" id="DIP-48114N"/>
<dbReference type="FunCoup" id="P69432">
    <property type="interactions" value="75"/>
</dbReference>
<dbReference type="IntAct" id="P69432">
    <property type="interactions" value="7"/>
</dbReference>
<dbReference type="MINT" id="P69432"/>
<dbReference type="STRING" id="511145.b1021"/>
<dbReference type="PaxDb" id="511145-b1021"/>
<dbReference type="DNASU" id="947503"/>
<dbReference type="EnsemblBacteria" id="AAC74106">
    <property type="protein sequence ID" value="AAC74106"/>
    <property type="gene ID" value="b1021"/>
</dbReference>
<dbReference type="GeneID" id="75171097"/>
<dbReference type="GeneID" id="947503"/>
<dbReference type="KEGG" id="ecj:JW1006"/>
<dbReference type="KEGG" id="eco:b1021"/>
<dbReference type="KEGG" id="ecoc:C3026_06210"/>
<dbReference type="PATRIC" id="fig|1411691.4.peg.1248"/>
<dbReference type="EchoBASE" id="EB3622"/>
<dbReference type="eggNOG" id="COG3658">
    <property type="taxonomic scope" value="Bacteria"/>
</dbReference>
<dbReference type="eggNOG" id="ENOG50338G7">
    <property type="taxonomic scope" value="Bacteria"/>
</dbReference>
<dbReference type="HOGENOM" id="CLU_131509_0_0_6"/>
<dbReference type="InParanoid" id="P69432"/>
<dbReference type="OMA" id="FWQSEAR"/>
<dbReference type="OrthoDB" id="7018808at2"/>
<dbReference type="BioCyc" id="EcoCyc:G6528-MONOMER"/>
<dbReference type="BioCyc" id="MetaCyc:G6528-MONOMER"/>
<dbReference type="PRO" id="PR:P69432"/>
<dbReference type="Proteomes" id="UP000000625">
    <property type="component" value="Chromosome"/>
</dbReference>
<dbReference type="GO" id="GO:0005886">
    <property type="term" value="C:plasma membrane"/>
    <property type="evidence" value="ECO:0000314"/>
    <property type="project" value="EcoCyc"/>
</dbReference>
<dbReference type="GO" id="GO:0043708">
    <property type="term" value="P:cell adhesion involved in biofilm formation"/>
    <property type="evidence" value="ECO:0000314"/>
    <property type="project" value="ComplexPortal"/>
</dbReference>
<dbReference type="GO" id="GO:0043709">
    <property type="term" value="P:cell adhesion involved in single-species biofilm formation"/>
    <property type="evidence" value="ECO:0007669"/>
    <property type="project" value="InterPro"/>
</dbReference>
<dbReference type="InterPro" id="IPR023829">
    <property type="entry name" value="PGA_PgaD"/>
</dbReference>
<dbReference type="NCBIfam" id="TIGR03940">
    <property type="entry name" value="PGA_PgaD"/>
    <property type="match status" value="1"/>
</dbReference>
<dbReference type="NCBIfam" id="NF011180">
    <property type="entry name" value="PRK14585.1"/>
    <property type="match status" value="1"/>
</dbReference>
<dbReference type="Pfam" id="PF13994">
    <property type="entry name" value="PgaD"/>
    <property type="match status" value="1"/>
</dbReference>
<gene>
    <name type="primary">pgaD</name>
    <name type="synonym">ycdP</name>
    <name type="ordered locus">b1021</name>
    <name type="ordered locus">JW1006</name>
</gene>
<accession>P69432</accession>
<accession>P75904</accession>
<comment type="function">
    <text evidence="2 4 5">Required for the synthesis of poly-beta-1,6-N-acetyl-D-glucosamine (PGA), a biofilm adhesin polysaccharide. May assist the glycosyltransferase PgaC in the polymerization of PGA.</text>
</comment>
<comment type="interaction">
    <interactant intactId="EBI-562069">
        <id>P69432</id>
    </interactant>
    <interactant intactId="EBI-550986">
        <id>P25522</id>
        <label>mnmE</label>
    </interactant>
    <organismsDiffer>false</organismsDiffer>
    <experiments>5</experiments>
</comment>
<comment type="interaction">
    <interactant intactId="EBI-562069">
        <id>P69432</id>
    </interactant>
    <interactant intactId="EBI-561450">
        <id>P75905</id>
        <label>pgaC</label>
    </interactant>
    <organismsDiffer>false</organismsDiffer>
    <experiments>2</experiments>
</comment>
<comment type="subcellular location">
    <subcellularLocation>
        <location evidence="3">Cell inner membrane</location>
        <topology evidence="3">Multi-pass membrane protein</topology>
    </subcellularLocation>
</comment>
<comment type="induction">
    <text evidence="5">Levels of this protein are positively controlled by the second messenger c-di-GMP (at protein level) at a post-transcriptional level. Increased levels of c-di-GMP lead to increased levels of PgaD.</text>
</comment>
<comment type="disruption phenotype">
    <text evidence="2 4">Cells lacking this gene do not synthesize PGA.</text>
</comment>
<sequence length="137" mass="16082">MNNLIITTRQSPVRLLVDYVATTILWTLFALFIFLFAMDLLTGYYWQSEARSRLQFYFLLAVANAVVLIVWALYNKLRFQKQQHHAAYQYTPQEYAESLAIPDELYQQLQKSHRMSVHFTSQGQIKMVVSEKALVRA</sequence>
<feature type="chain" id="PRO_0000058349" description="Biofilm PGA synthesis protein PgaD">
    <location>
        <begin position="1"/>
        <end position="137"/>
    </location>
</feature>
<feature type="topological domain" description="Cytoplasmic" evidence="1">
    <location>
        <begin position="1"/>
        <end position="23"/>
    </location>
</feature>
<feature type="transmembrane region" description="Helical" evidence="1">
    <location>
        <begin position="24"/>
        <end position="44"/>
    </location>
</feature>
<feature type="topological domain" description="Periplasmic" evidence="1">
    <location>
        <begin position="45"/>
        <end position="53"/>
    </location>
</feature>
<feature type="transmembrane region" description="Helical" evidence="1">
    <location>
        <begin position="54"/>
        <end position="74"/>
    </location>
</feature>
<feature type="topological domain" description="Cytoplasmic" evidence="1">
    <location>
        <begin position="75"/>
        <end position="137"/>
    </location>
</feature>
<evidence type="ECO:0000255" key="1"/>
<evidence type="ECO:0000269" key="2">
    <source>
    </source>
</evidence>
<evidence type="ECO:0000269" key="3">
    <source>
    </source>
</evidence>
<evidence type="ECO:0000269" key="4">
    <source>
    </source>
</evidence>
<evidence type="ECO:0000269" key="5">
    <source>
    </source>
</evidence>
<keyword id="KW-0997">Cell inner membrane</keyword>
<keyword id="KW-1003">Cell membrane</keyword>
<keyword id="KW-0472">Membrane</keyword>
<keyword id="KW-1185">Reference proteome</keyword>
<keyword id="KW-0812">Transmembrane</keyword>
<keyword id="KW-1133">Transmembrane helix</keyword>
<organism>
    <name type="scientific">Escherichia coli (strain K12)</name>
    <dbReference type="NCBI Taxonomy" id="83333"/>
    <lineage>
        <taxon>Bacteria</taxon>
        <taxon>Pseudomonadati</taxon>
        <taxon>Pseudomonadota</taxon>
        <taxon>Gammaproteobacteria</taxon>
        <taxon>Enterobacterales</taxon>
        <taxon>Enterobacteriaceae</taxon>
        <taxon>Escherichia</taxon>
    </lineage>
</organism>
<protein>
    <recommendedName>
        <fullName>Biofilm PGA synthesis protein PgaD</fullName>
    </recommendedName>
</protein>